<gene>
    <name type="primary">CCR5</name>
    <name type="synonym">CMKBR5</name>
</gene>
<organism>
    <name type="scientific">Oryctolagus cuniculus</name>
    <name type="common">Rabbit</name>
    <dbReference type="NCBI Taxonomy" id="9986"/>
    <lineage>
        <taxon>Eukaryota</taxon>
        <taxon>Metazoa</taxon>
        <taxon>Chordata</taxon>
        <taxon>Craniata</taxon>
        <taxon>Vertebrata</taxon>
        <taxon>Euteleostomi</taxon>
        <taxon>Mammalia</taxon>
        <taxon>Eutheria</taxon>
        <taxon>Euarchontoglires</taxon>
        <taxon>Glires</taxon>
        <taxon>Lagomorpha</taxon>
        <taxon>Leporidae</taxon>
        <taxon>Oryctolagus</taxon>
    </lineage>
</organism>
<feature type="chain" id="PRO_0000253617" description="C-C chemokine receptor type 5">
    <location>
        <begin position="1"/>
        <end position="352"/>
    </location>
</feature>
<feature type="topological domain" description="Extracellular" evidence="3">
    <location>
        <begin position="1"/>
        <end position="30"/>
    </location>
</feature>
<feature type="transmembrane region" description="Helical; Name=1" evidence="3">
    <location>
        <begin position="31"/>
        <end position="58"/>
    </location>
</feature>
<feature type="topological domain" description="Cytoplasmic" evidence="3">
    <location>
        <begin position="59"/>
        <end position="68"/>
    </location>
</feature>
<feature type="transmembrane region" description="Helical; Name=2" evidence="3">
    <location>
        <begin position="69"/>
        <end position="89"/>
    </location>
</feature>
<feature type="topological domain" description="Extracellular" evidence="3">
    <location>
        <begin position="90"/>
        <end position="102"/>
    </location>
</feature>
<feature type="transmembrane region" description="Helical; Name=3" evidence="3">
    <location>
        <begin position="103"/>
        <end position="124"/>
    </location>
</feature>
<feature type="topological domain" description="Cytoplasmic" evidence="3">
    <location>
        <begin position="125"/>
        <end position="141"/>
    </location>
</feature>
<feature type="transmembrane region" description="Helical; Name=4" evidence="3">
    <location>
        <begin position="142"/>
        <end position="166"/>
    </location>
</feature>
<feature type="topological domain" description="Extracellular" evidence="3">
    <location>
        <begin position="167"/>
        <end position="198"/>
    </location>
</feature>
<feature type="transmembrane region" description="Helical; Name=5" evidence="3">
    <location>
        <begin position="199"/>
        <end position="218"/>
    </location>
</feature>
<feature type="topological domain" description="Cytoplasmic" evidence="3">
    <location>
        <begin position="219"/>
        <end position="235"/>
    </location>
</feature>
<feature type="transmembrane region" description="Helical; Name=6" evidence="3">
    <location>
        <begin position="236"/>
        <end position="260"/>
    </location>
</feature>
<feature type="topological domain" description="Extracellular" evidence="3">
    <location>
        <begin position="261"/>
        <end position="277"/>
    </location>
</feature>
<feature type="transmembrane region" description="Helical; Name=7" evidence="3">
    <location>
        <begin position="278"/>
        <end position="301"/>
    </location>
</feature>
<feature type="topological domain" description="Cytoplasmic" evidence="3">
    <location>
        <begin position="302"/>
        <end position="352"/>
    </location>
</feature>
<feature type="region of interest" description="Disordered" evidence="5">
    <location>
        <begin position="332"/>
        <end position="352"/>
    </location>
</feature>
<feature type="compositionally biased region" description="Polar residues" evidence="5">
    <location>
        <begin position="337"/>
        <end position="346"/>
    </location>
</feature>
<feature type="modified residue" description="Sulfotyrosine" evidence="1">
    <location>
        <position position="3"/>
    </location>
</feature>
<feature type="modified residue" description="Sulfotyrosine" evidence="3">
    <location>
        <position position="10"/>
    </location>
</feature>
<feature type="modified residue" description="Sulfotyrosine" evidence="3">
    <location>
        <position position="14"/>
    </location>
</feature>
<feature type="modified residue" description="Phosphoserine; by BARK1" evidence="1">
    <location>
        <position position="336"/>
    </location>
</feature>
<feature type="modified residue" description="Phosphoserine; by BARK1" evidence="1">
    <location>
        <position position="337"/>
    </location>
</feature>
<feature type="modified residue" description="Phosphoserine; by BARK1" evidence="1">
    <location>
        <position position="342"/>
    </location>
</feature>
<feature type="modified residue" description="Phosphoserine; by BARK1" evidence="1">
    <location>
        <position position="349"/>
    </location>
</feature>
<feature type="lipid moiety-binding region" description="S-palmitoyl cysteine" evidence="1">
    <location>
        <position position="321"/>
    </location>
</feature>
<feature type="lipid moiety-binding region" description="S-palmitoyl cysteine" evidence="1">
    <location>
        <position position="324"/>
    </location>
</feature>
<feature type="glycosylation site" description="O-linked (GalNAc...) serine" evidence="1">
    <location>
        <position position="6"/>
    </location>
</feature>
<feature type="glycosylation site" description="O-linked (GalNAc...) serine" evidence="3">
    <location>
        <position position="17"/>
    </location>
</feature>
<feature type="disulfide bond" evidence="1">
    <location>
        <begin position="20"/>
        <end position="269"/>
    </location>
</feature>
<feature type="disulfide bond" evidence="4">
    <location>
        <begin position="101"/>
        <end position="178"/>
    </location>
</feature>
<dbReference type="EMBL" id="DQ444458">
    <property type="protein sequence ID" value="ABD79048.1"/>
    <property type="molecule type" value="Genomic_DNA"/>
</dbReference>
<dbReference type="RefSeq" id="NP_001164596.1">
    <property type="nucleotide sequence ID" value="NM_001171125.1"/>
</dbReference>
<dbReference type="RefSeq" id="XP_008258698.1">
    <property type="nucleotide sequence ID" value="XM_008260476.2"/>
</dbReference>
<dbReference type="SMR" id="Q1ZY22"/>
<dbReference type="FunCoup" id="Q1ZY22">
    <property type="interactions" value="152"/>
</dbReference>
<dbReference type="STRING" id="9986.ENSOCUP00000017988"/>
<dbReference type="BindingDB" id="Q1ZY22"/>
<dbReference type="ChEMBL" id="CHEMBL1795147"/>
<dbReference type="GlyCosmos" id="Q1ZY22">
    <property type="glycosylation" value="2 sites, No reported glycans"/>
</dbReference>
<dbReference type="PaxDb" id="9986-ENSOCUP00000017988"/>
<dbReference type="Ensembl" id="ENSOCUT00000003662.3">
    <property type="protein sequence ID" value="ENSOCUP00000017988.1"/>
    <property type="gene ID" value="ENSOCUG00000003665.3"/>
</dbReference>
<dbReference type="GeneID" id="100101579"/>
<dbReference type="KEGG" id="ocu:100101579"/>
<dbReference type="CTD" id="1234"/>
<dbReference type="eggNOG" id="KOG3656">
    <property type="taxonomic scope" value="Eukaryota"/>
</dbReference>
<dbReference type="GeneTree" id="ENSGT01020000230359"/>
<dbReference type="HOGENOM" id="CLU_009579_8_3_1"/>
<dbReference type="InParanoid" id="Q1ZY22"/>
<dbReference type="OMA" id="HYTCSPH"/>
<dbReference type="OrthoDB" id="9876908at2759"/>
<dbReference type="TreeFam" id="TF330966"/>
<dbReference type="PRO" id="PR:Q1ZY22"/>
<dbReference type="Proteomes" id="UP000001811">
    <property type="component" value="Chromosome 9"/>
</dbReference>
<dbReference type="Bgee" id="ENSOCUG00000003665">
    <property type="expression patterns" value="Expressed in blood and 16 other cell types or tissues"/>
</dbReference>
<dbReference type="GO" id="GO:0005737">
    <property type="term" value="C:cytoplasm"/>
    <property type="evidence" value="ECO:0007669"/>
    <property type="project" value="TreeGrafter"/>
</dbReference>
<dbReference type="GO" id="GO:0009897">
    <property type="term" value="C:external side of plasma membrane"/>
    <property type="evidence" value="ECO:0000250"/>
    <property type="project" value="UniProtKB"/>
</dbReference>
<dbReference type="GO" id="GO:0019957">
    <property type="term" value="F:C-C chemokine binding"/>
    <property type="evidence" value="ECO:0007669"/>
    <property type="project" value="TreeGrafter"/>
</dbReference>
<dbReference type="GO" id="GO:0016493">
    <property type="term" value="F:C-C chemokine receptor activity"/>
    <property type="evidence" value="ECO:0000250"/>
    <property type="project" value="UniProtKB"/>
</dbReference>
<dbReference type="GO" id="GO:0019722">
    <property type="term" value="P:calcium-mediated signaling"/>
    <property type="evidence" value="ECO:0007669"/>
    <property type="project" value="TreeGrafter"/>
</dbReference>
<dbReference type="GO" id="GO:0060326">
    <property type="term" value="P:cell chemotaxis"/>
    <property type="evidence" value="ECO:0007669"/>
    <property type="project" value="TreeGrafter"/>
</dbReference>
<dbReference type="GO" id="GO:0006955">
    <property type="term" value="P:immune response"/>
    <property type="evidence" value="ECO:0007669"/>
    <property type="project" value="InterPro"/>
</dbReference>
<dbReference type="GO" id="GO:0006954">
    <property type="term" value="P:inflammatory response"/>
    <property type="evidence" value="ECO:0007669"/>
    <property type="project" value="InterPro"/>
</dbReference>
<dbReference type="GO" id="GO:0007204">
    <property type="term" value="P:positive regulation of cytosolic calcium ion concentration"/>
    <property type="evidence" value="ECO:0007669"/>
    <property type="project" value="TreeGrafter"/>
</dbReference>
<dbReference type="CDD" id="cd15184">
    <property type="entry name" value="7tmA_CCR5_CCR2"/>
    <property type="match status" value="1"/>
</dbReference>
<dbReference type="FunFam" id="1.20.1070.10:FF:000026">
    <property type="entry name" value="C-C chemokine receptor type 5"/>
    <property type="match status" value="1"/>
</dbReference>
<dbReference type="Gene3D" id="1.20.1070.10">
    <property type="entry name" value="Rhodopsin 7-helix transmembrane proteins"/>
    <property type="match status" value="1"/>
</dbReference>
<dbReference type="InterPro" id="IPR050119">
    <property type="entry name" value="CCR1-9-like"/>
</dbReference>
<dbReference type="InterPro" id="IPR002240">
    <property type="entry name" value="Chemokine_CCR5"/>
</dbReference>
<dbReference type="InterPro" id="IPR000355">
    <property type="entry name" value="Chemokine_rcpt"/>
</dbReference>
<dbReference type="InterPro" id="IPR000276">
    <property type="entry name" value="GPCR_Rhodpsn"/>
</dbReference>
<dbReference type="InterPro" id="IPR017452">
    <property type="entry name" value="GPCR_Rhodpsn_7TM"/>
</dbReference>
<dbReference type="PANTHER" id="PTHR10489:SF913">
    <property type="entry name" value="C-C CHEMOKINE RECEPTOR TYPE 2"/>
    <property type="match status" value="1"/>
</dbReference>
<dbReference type="PANTHER" id="PTHR10489">
    <property type="entry name" value="CELL ADHESION MOLECULE"/>
    <property type="match status" value="1"/>
</dbReference>
<dbReference type="Pfam" id="PF00001">
    <property type="entry name" value="7tm_1"/>
    <property type="match status" value="1"/>
</dbReference>
<dbReference type="PRINTS" id="PR00657">
    <property type="entry name" value="CCCHEMOKINER"/>
</dbReference>
<dbReference type="PRINTS" id="PR01110">
    <property type="entry name" value="CHEMOKINER5"/>
</dbReference>
<dbReference type="PRINTS" id="PR00237">
    <property type="entry name" value="GPCRRHODOPSN"/>
</dbReference>
<dbReference type="SUPFAM" id="SSF81321">
    <property type="entry name" value="Family A G protein-coupled receptor-like"/>
    <property type="match status" value="1"/>
</dbReference>
<dbReference type="PROSITE" id="PS00237">
    <property type="entry name" value="G_PROTEIN_RECEP_F1_1"/>
    <property type="match status" value="1"/>
</dbReference>
<dbReference type="PROSITE" id="PS50262">
    <property type="entry name" value="G_PROTEIN_RECEP_F1_2"/>
    <property type="match status" value="1"/>
</dbReference>
<reference key="1">
    <citation type="submission" date="2006-03" db="EMBL/GenBank/DDBJ databases">
        <title>The structure of the CCR2 and CCR5 regulatory regions of rabbit inferred by PCR and NCBI megablast walking.</title>
        <authorList>
            <person name="van der Loo W."/>
            <person name="Abrantes J."/>
            <person name="Carmo C.R."/>
            <person name="Esteves P."/>
        </authorList>
    </citation>
    <scope>NUCLEOTIDE SEQUENCE [GENOMIC DNA]</scope>
</reference>
<comment type="function">
    <text evidence="1">Receptor for a number of inflammatory CC-chemokines including CCL3/MIP-1-alpha, CCL4/MIP-1-beta and RANTES and subsequently transduces a signal by increasing the intracellular calcium ion level. May play a role in the control of granulocytic lineage proliferation or differentiation. Participates in T-lymphocyte migration to the infection site by acting as a chemotactic receptor.</text>
</comment>
<comment type="subunit">
    <text evidence="1">Interacts with PRAF2. Efficient ligand binding to CCL3/MIP-1alpha and CCL4/MIP-1beta requires sulfation, O-glycosylation and sialic acid modifications. Glycosylation on Ser-6 is required for efficient binding of CCL4. Interacts with GRK2. Interacts with ARRB1 and ARRB2. Interacts with CNIH4. Interacts with S100A4; this interaction stimulates T-lymphocyte chemotaxis.</text>
</comment>
<comment type="subcellular location">
    <subcellularLocation>
        <location evidence="2">Cell membrane</location>
        <topology evidence="2">Multi-pass membrane protein</topology>
    </subcellularLocation>
</comment>
<comment type="PTM">
    <text evidence="1">Sulfated on at least 2 of the N-terminal tyrosines. Sulfation is required for efficient binding of the chemokines, CCL3 and CCL4 (By similarity).</text>
</comment>
<comment type="PTM">
    <text evidence="1">O-glycosylated, but not N-glycosylated. Ser-6 appears to be the major site. Also sialylated glycans present which contribute to chemokine binding. Ser-17 may also be glycosylated and, if so, with small moieties such as a T-antigen (By similarity).</text>
</comment>
<comment type="PTM">
    <text evidence="1">Palmitoylation in the C-terminal is important for cell surface expression.</text>
</comment>
<comment type="PTM">
    <text evidence="1">Phosphorylation on serine residues in the C-terminal is stimulated by binding CC chemokines especially by APO-RANTES.</text>
</comment>
<comment type="similarity">
    <text evidence="4">Belongs to the G-protein coupled receptor 1 family.</text>
</comment>
<name>CCR5_RABIT</name>
<evidence type="ECO:0000250" key="1">
    <source>
        <dbReference type="UniProtKB" id="P51681"/>
    </source>
</evidence>
<evidence type="ECO:0000250" key="2">
    <source>
        <dbReference type="UniProtKB" id="Q9XT76"/>
    </source>
</evidence>
<evidence type="ECO:0000255" key="3"/>
<evidence type="ECO:0000255" key="4">
    <source>
        <dbReference type="PROSITE-ProRule" id="PRU00521"/>
    </source>
</evidence>
<evidence type="ECO:0000256" key="5">
    <source>
        <dbReference type="SAM" id="MobiDB-lite"/>
    </source>
</evidence>
<keyword id="KW-1003">Cell membrane</keyword>
<keyword id="KW-1015">Disulfide bond</keyword>
<keyword id="KW-0297">G-protein coupled receptor</keyword>
<keyword id="KW-0325">Glycoprotein</keyword>
<keyword id="KW-0449">Lipoprotein</keyword>
<keyword id="KW-0472">Membrane</keyword>
<keyword id="KW-0564">Palmitate</keyword>
<keyword id="KW-0597">Phosphoprotein</keyword>
<keyword id="KW-0675">Receptor</keyword>
<keyword id="KW-1185">Reference proteome</keyword>
<keyword id="KW-0765">Sulfation</keyword>
<keyword id="KW-0807">Transducer</keyword>
<keyword id="KW-0812">Transmembrane</keyword>
<keyword id="KW-1133">Transmembrane helix</keyword>
<accession>Q1ZY22</accession>
<proteinExistence type="inferred from homology"/>
<sequence length="352" mass="40074">MDYSMSTALYDIDYGMSEPCQKIDVKQVAARLLPPLYSLVFIFGFVGNLLVVLILITCKKLKSMTDIYLLNLAISDLLFLLTLPLWAHYAAAEWDFGGAMCKVFTGMYHMGYFGGIFFIILLTIDRYLAIVHAVFALKARTVTFGVVTSGVTWVAAILVSLPDIIFTRSQKEGFRCSCSPHFPASQYQFWKNFHTIMRNILSLVLPLLVMIVCYSGILKTLLRCRNEKRRHRAVRLIFAIMVVYFLFWAPYNVVLLLNTFQEFFGLNNCSSSNRLDRAMQVTETLGMTHCCINPVVYAFVGEKFRSYLSAFFRKHVAKRLCKHCPLLPRETPEPASSVYTRSTGEQEISVGL</sequence>
<protein>
    <recommendedName>
        <fullName>C-C chemokine receptor type 5</fullName>
        <shortName>C-C CKR-5</shortName>
        <shortName>CC-CKR-5</shortName>
        <shortName>CCR-5</shortName>
    </recommendedName>
    <alternativeName>
        <fullName>MIP-1 alpha receptor</fullName>
    </alternativeName>
    <cdAntigenName>CD195</cdAntigenName>
</protein>